<evidence type="ECO:0000255" key="1">
    <source>
        <dbReference type="HAMAP-Rule" id="MF_00228"/>
    </source>
</evidence>
<keyword id="KW-0067">ATP-binding</keyword>
<keyword id="KW-0418">Kinase</keyword>
<keyword id="KW-0460">Magnesium</keyword>
<keyword id="KW-0479">Metal-binding</keyword>
<keyword id="KW-0547">Nucleotide-binding</keyword>
<keyword id="KW-1185">Reference proteome</keyword>
<keyword id="KW-0784">Thiamine biosynthesis</keyword>
<keyword id="KW-0808">Transferase</keyword>
<gene>
    <name evidence="1" type="primary">thiM</name>
    <name type="ordered locus">EcE24377A_2392</name>
</gene>
<proteinExistence type="inferred from homology"/>
<sequence length="262" mass="27338">MQVDLLSSAQSAHALHLFHQHSPLVHCMTNDVVQTFTANTLLVLGASPAMVIETEEASQFAAIASALLINVGTLTQLCAQSMCAAVEQAKSSQTPWTLDPVAVGALDYRRRFCLELLSHKPTAIRGNASEIMALAGIANGGRGVDTTDAAANAIPAAQTLARETGAIVVVTGEMDYVTDGHRIIGIHGGDPLMTKVVGTGCALSAVVAACCALPGDTLENVASACHWMKQAGERAVARSEGPGSFVPHFLDALWQLTQEVQA</sequence>
<name>THIM_ECO24</name>
<protein>
    <recommendedName>
        <fullName evidence="1">Hydroxyethylthiazole kinase</fullName>
        <ecNumber evidence="1">2.7.1.50</ecNumber>
    </recommendedName>
    <alternativeName>
        <fullName evidence="1">4-methyl-5-beta-hydroxyethylthiazole kinase</fullName>
        <shortName evidence="1">TH kinase</shortName>
        <shortName evidence="1">Thz kinase</shortName>
    </alternativeName>
</protein>
<comment type="function">
    <text evidence="1">Catalyzes the phosphorylation of the hydroxyl group of 4-methyl-5-beta-hydroxyethylthiazole (THZ).</text>
</comment>
<comment type="catalytic activity">
    <reaction evidence="1">
        <text>5-(2-hydroxyethyl)-4-methylthiazole + ATP = 4-methyl-5-(2-phosphooxyethyl)-thiazole + ADP + H(+)</text>
        <dbReference type="Rhea" id="RHEA:24212"/>
        <dbReference type="ChEBI" id="CHEBI:15378"/>
        <dbReference type="ChEBI" id="CHEBI:17957"/>
        <dbReference type="ChEBI" id="CHEBI:30616"/>
        <dbReference type="ChEBI" id="CHEBI:58296"/>
        <dbReference type="ChEBI" id="CHEBI:456216"/>
        <dbReference type="EC" id="2.7.1.50"/>
    </reaction>
</comment>
<comment type="cofactor">
    <cofactor evidence="1">
        <name>Mg(2+)</name>
        <dbReference type="ChEBI" id="CHEBI:18420"/>
    </cofactor>
</comment>
<comment type="pathway">
    <text evidence="1">Cofactor biosynthesis; thiamine diphosphate biosynthesis; 4-methyl-5-(2-phosphoethyl)-thiazole from 5-(2-hydroxyethyl)-4-methylthiazole: step 1/1.</text>
</comment>
<comment type="similarity">
    <text evidence="1">Belongs to the Thz kinase family.</text>
</comment>
<accession>A7ZNS3</accession>
<feature type="chain" id="PRO_0000383859" description="Hydroxyethylthiazole kinase">
    <location>
        <begin position="1"/>
        <end position="262"/>
    </location>
</feature>
<feature type="binding site" evidence="1">
    <location>
        <position position="50"/>
    </location>
    <ligand>
        <name>substrate</name>
    </ligand>
</feature>
<feature type="binding site" evidence="1">
    <location>
        <position position="125"/>
    </location>
    <ligand>
        <name>ATP</name>
        <dbReference type="ChEBI" id="CHEBI:30616"/>
    </ligand>
</feature>
<feature type="binding site" evidence="1">
    <location>
        <position position="171"/>
    </location>
    <ligand>
        <name>ATP</name>
        <dbReference type="ChEBI" id="CHEBI:30616"/>
    </ligand>
</feature>
<feature type="binding site" evidence="1">
    <location>
        <position position="198"/>
    </location>
    <ligand>
        <name>substrate</name>
    </ligand>
</feature>
<dbReference type="EC" id="2.7.1.50" evidence="1"/>
<dbReference type="EMBL" id="CP000800">
    <property type="protein sequence ID" value="ABV17275.1"/>
    <property type="molecule type" value="Genomic_DNA"/>
</dbReference>
<dbReference type="RefSeq" id="WP_001195622.1">
    <property type="nucleotide sequence ID" value="NC_009801.1"/>
</dbReference>
<dbReference type="SMR" id="A7ZNS3"/>
<dbReference type="KEGG" id="ecw:EcE24377A_2392"/>
<dbReference type="HOGENOM" id="CLU_019943_0_1_6"/>
<dbReference type="UniPathway" id="UPA00060">
    <property type="reaction ID" value="UER00139"/>
</dbReference>
<dbReference type="Proteomes" id="UP000001122">
    <property type="component" value="Chromosome"/>
</dbReference>
<dbReference type="GO" id="GO:0005524">
    <property type="term" value="F:ATP binding"/>
    <property type="evidence" value="ECO:0007669"/>
    <property type="project" value="UniProtKB-UniRule"/>
</dbReference>
<dbReference type="GO" id="GO:0004417">
    <property type="term" value="F:hydroxyethylthiazole kinase activity"/>
    <property type="evidence" value="ECO:0007669"/>
    <property type="project" value="UniProtKB-UniRule"/>
</dbReference>
<dbReference type="GO" id="GO:0000287">
    <property type="term" value="F:magnesium ion binding"/>
    <property type="evidence" value="ECO:0007669"/>
    <property type="project" value="UniProtKB-UniRule"/>
</dbReference>
<dbReference type="GO" id="GO:0009228">
    <property type="term" value="P:thiamine biosynthetic process"/>
    <property type="evidence" value="ECO:0007669"/>
    <property type="project" value="UniProtKB-KW"/>
</dbReference>
<dbReference type="GO" id="GO:0009229">
    <property type="term" value="P:thiamine diphosphate biosynthetic process"/>
    <property type="evidence" value="ECO:0007669"/>
    <property type="project" value="UniProtKB-UniRule"/>
</dbReference>
<dbReference type="CDD" id="cd01170">
    <property type="entry name" value="THZ_kinase"/>
    <property type="match status" value="1"/>
</dbReference>
<dbReference type="FunFam" id="3.40.1190.20:FF:000015">
    <property type="entry name" value="Hydroxyethylthiazole kinase"/>
    <property type="match status" value="1"/>
</dbReference>
<dbReference type="Gene3D" id="3.40.1190.20">
    <property type="match status" value="1"/>
</dbReference>
<dbReference type="HAMAP" id="MF_00228">
    <property type="entry name" value="Thz_kinase"/>
    <property type="match status" value="1"/>
</dbReference>
<dbReference type="InterPro" id="IPR000417">
    <property type="entry name" value="Hyethyz_kinase"/>
</dbReference>
<dbReference type="InterPro" id="IPR029056">
    <property type="entry name" value="Ribokinase-like"/>
</dbReference>
<dbReference type="NCBIfam" id="NF006830">
    <property type="entry name" value="PRK09355.1"/>
    <property type="match status" value="1"/>
</dbReference>
<dbReference type="NCBIfam" id="TIGR00694">
    <property type="entry name" value="thiM"/>
    <property type="match status" value="1"/>
</dbReference>
<dbReference type="Pfam" id="PF02110">
    <property type="entry name" value="HK"/>
    <property type="match status" value="1"/>
</dbReference>
<dbReference type="PIRSF" id="PIRSF000513">
    <property type="entry name" value="Thz_kinase"/>
    <property type="match status" value="1"/>
</dbReference>
<dbReference type="PRINTS" id="PR01099">
    <property type="entry name" value="HYETHTZKNASE"/>
</dbReference>
<dbReference type="SUPFAM" id="SSF53613">
    <property type="entry name" value="Ribokinase-like"/>
    <property type="match status" value="1"/>
</dbReference>
<reference key="1">
    <citation type="journal article" date="2008" name="J. Bacteriol.">
        <title>The pangenome structure of Escherichia coli: comparative genomic analysis of E. coli commensal and pathogenic isolates.</title>
        <authorList>
            <person name="Rasko D.A."/>
            <person name="Rosovitz M.J."/>
            <person name="Myers G.S.A."/>
            <person name="Mongodin E.F."/>
            <person name="Fricke W.F."/>
            <person name="Gajer P."/>
            <person name="Crabtree J."/>
            <person name="Sebaihia M."/>
            <person name="Thomson N.R."/>
            <person name="Chaudhuri R."/>
            <person name="Henderson I.R."/>
            <person name="Sperandio V."/>
            <person name="Ravel J."/>
        </authorList>
    </citation>
    <scope>NUCLEOTIDE SEQUENCE [LARGE SCALE GENOMIC DNA]</scope>
    <source>
        <strain>E24377A / ETEC</strain>
    </source>
</reference>
<organism>
    <name type="scientific">Escherichia coli O139:H28 (strain E24377A / ETEC)</name>
    <dbReference type="NCBI Taxonomy" id="331111"/>
    <lineage>
        <taxon>Bacteria</taxon>
        <taxon>Pseudomonadati</taxon>
        <taxon>Pseudomonadota</taxon>
        <taxon>Gammaproteobacteria</taxon>
        <taxon>Enterobacterales</taxon>
        <taxon>Enterobacteriaceae</taxon>
        <taxon>Escherichia</taxon>
    </lineage>
</organism>